<proteinExistence type="inferred from homology"/>
<name>YIDD_MYCBO</name>
<dbReference type="EMBL" id="LT708304">
    <property type="protein sequence ID" value="SIU02584.1"/>
    <property type="molecule type" value="Genomic_DNA"/>
</dbReference>
<dbReference type="RefSeq" id="NP_857588.1">
    <property type="nucleotide sequence ID" value="NC_002945.3"/>
</dbReference>
<dbReference type="KEGG" id="mbo:BQ2027_MB3953C"/>
<dbReference type="PATRIC" id="fig|233413.5.peg.4331"/>
<dbReference type="Proteomes" id="UP000001419">
    <property type="component" value="Chromosome"/>
</dbReference>
<dbReference type="GO" id="GO:0005886">
    <property type="term" value="C:plasma membrane"/>
    <property type="evidence" value="ECO:0007669"/>
    <property type="project" value="UniProtKB-SubCell"/>
</dbReference>
<dbReference type="HAMAP" id="MF_00386">
    <property type="entry name" value="UPF0161_YidD"/>
    <property type="match status" value="1"/>
</dbReference>
<dbReference type="InterPro" id="IPR002696">
    <property type="entry name" value="Membr_insert_effic_factor_YidD"/>
</dbReference>
<dbReference type="NCBIfam" id="TIGR00278">
    <property type="entry name" value="membrane protein insertion efficiency factor YidD"/>
    <property type="match status" value="1"/>
</dbReference>
<dbReference type="PANTHER" id="PTHR33383">
    <property type="entry name" value="MEMBRANE PROTEIN INSERTION EFFICIENCY FACTOR-RELATED"/>
    <property type="match status" value="1"/>
</dbReference>
<dbReference type="PANTHER" id="PTHR33383:SF1">
    <property type="entry name" value="MEMBRANE PROTEIN INSERTION EFFICIENCY FACTOR-RELATED"/>
    <property type="match status" value="1"/>
</dbReference>
<dbReference type="Pfam" id="PF01809">
    <property type="entry name" value="YidD"/>
    <property type="match status" value="1"/>
</dbReference>
<dbReference type="SMART" id="SM01234">
    <property type="entry name" value="Haemolytic"/>
    <property type="match status" value="1"/>
</dbReference>
<accession>P67301</accession>
<accession>A0A1R3Y5P9</accession>
<accession>O53600</accession>
<accession>X2BQ10</accession>
<protein>
    <recommendedName>
        <fullName evidence="1">Putative membrane protein insertion efficiency factor</fullName>
    </recommendedName>
</protein>
<evidence type="ECO:0000255" key="1">
    <source>
        <dbReference type="HAMAP-Rule" id="MF_00386"/>
    </source>
</evidence>
<evidence type="ECO:0000256" key="2">
    <source>
        <dbReference type="SAM" id="MobiDB-lite"/>
    </source>
</evidence>
<feature type="chain" id="PRO_0000171842" description="Putative membrane protein insertion efficiency factor">
    <location>
        <begin position="1"/>
        <end position="120"/>
    </location>
</feature>
<feature type="region of interest" description="Disordered" evidence="2">
    <location>
        <begin position="93"/>
        <end position="120"/>
    </location>
</feature>
<sequence>MSLSRQSCGRVVRVTGRASARGLIFVIQVYRHMLSPLRPASCRFVPTCSQYAVDALTEYGLLRGSWLTMIRLAKCGPWHRGGWDPIPEGLTTGRSCQTDVDGANDDWNPASKRGERESFV</sequence>
<comment type="function">
    <text evidence="1">Could be involved in insertion of integral membrane proteins into the membrane.</text>
</comment>
<comment type="subcellular location">
    <subcellularLocation>
        <location evidence="1">Cell membrane</location>
        <topology evidence="1">Peripheral membrane protein</topology>
        <orientation evidence="1">Cytoplasmic side</orientation>
    </subcellularLocation>
</comment>
<comment type="similarity">
    <text evidence="1">Belongs to the UPF0161 family.</text>
</comment>
<keyword id="KW-1003">Cell membrane</keyword>
<keyword id="KW-0472">Membrane</keyword>
<keyword id="KW-1185">Reference proteome</keyword>
<gene>
    <name type="ordered locus">BQ2027_MB3953C</name>
</gene>
<reference key="1">
    <citation type="journal article" date="2003" name="Proc. Natl. Acad. Sci. U.S.A.">
        <title>The complete genome sequence of Mycobacterium bovis.</title>
        <authorList>
            <person name="Garnier T."/>
            <person name="Eiglmeier K."/>
            <person name="Camus J.-C."/>
            <person name="Medina N."/>
            <person name="Mansoor H."/>
            <person name="Pryor M."/>
            <person name="Duthoy S."/>
            <person name="Grondin S."/>
            <person name="Lacroix C."/>
            <person name="Monsempe C."/>
            <person name="Simon S."/>
            <person name="Harris B."/>
            <person name="Atkin R."/>
            <person name="Doggett J."/>
            <person name="Mayes R."/>
            <person name="Keating L."/>
            <person name="Wheeler P.R."/>
            <person name="Parkhill J."/>
            <person name="Barrell B.G."/>
            <person name="Cole S.T."/>
            <person name="Gordon S.V."/>
            <person name="Hewinson R.G."/>
        </authorList>
    </citation>
    <scope>NUCLEOTIDE SEQUENCE [LARGE SCALE GENOMIC DNA]</scope>
    <source>
        <strain>ATCC BAA-935 / AF2122/97</strain>
    </source>
</reference>
<reference key="2">
    <citation type="journal article" date="2017" name="Genome Announc.">
        <title>Updated reference genome sequence and annotation of Mycobacterium bovis AF2122/97.</title>
        <authorList>
            <person name="Malone K.M."/>
            <person name="Farrell D."/>
            <person name="Stuber T.P."/>
            <person name="Schubert O.T."/>
            <person name="Aebersold R."/>
            <person name="Robbe-Austerman S."/>
            <person name="Gordon S.V."/>
        </authorList>
    </citation>
    <scope>NUCLEOTIDE SEQUENCE [LARGE SCALE GENOMIC DNA]</scope>
    <scope>GENOME REANNOTATION</scope>
    <source>
        <strain>ATCC BAA-935 / AF2122/97</strain>
    </source>
</reference>
<organism>
    <name type="scientific">Mycobacterium bovis (strain ATCC BAA-935 / AF2122/97)</name>
    <dbReference type="NCBI Taxonomy" id="233413"/>
    <lineage>
        <taxon>Bacteria</taxon>
        <taxon>Bacillati</taxon>
        <taxon>Actinomycetota</taxon>
        <taxon>Actinomycetes</taxon>
        <taxon>Mycobacteriales</taxon>
        <taxon>Mycobacteriaceae</taxon>
        <taxon>Mycobacterium</taxon>
        <taxon>Mycobacterium tuberculosis complex</taxon>
    </lineage>
</organism>